<name>RRF_BRASB</name>
<evidence type="ECO:0000255" key="1">
    <source>
        <dbReference type="HAMAP-Rule" id="MF_00040"/>
    </source>
</evidence>
<sequence>MSTGNFDLNELKRRMQGATQALKHELGGLRTGRASASMVEPVQVEAYGSHMPLNQLATVSVPEPRLLSVQVWDRTMVKAVEKAIVDSNLGLSPATEGQVIRLRIPELNQERRKELVKVAHKYAEAARVAVRHVRRDGLDTVKKLEKNHEISEDDQERLATDIQKATDSVISEIDQLLAAKEKEILTV</sequence>
<dbReference type="EMBL" id="CP000494">
    <property type="protein sequence ID" value="ABQ36546.1"/>
    <property type="molecule type" value="Genomic_DNA"/>
</dbReference>
<dbReference type="RefSeq" id="WP_012044542.1">
    <property type="nucleotide sequence ID" value="NC_009485.1"/>
</dbReference>
<dbReference type="SMR" id="A5EK52"/>
<dbReference type="STRING" id="288000.BBta_4514"/>
<dbReference type="KEGG" id="bbt:BBta_4514"/>
<dbReference type="eggNOG" id="COG0233">
    <property type="taxonomic scope" value="Bacteria"/>
</dbReference>
<dbReference type="HOGENOM" id="CLU_073981_2_1_5"/>
<dbReference type="OrthoDB" id="9804006at2"/>
<dbReference type="Proteomes" id="UP000000246">
    <property type="component" value="Chromosome"/>
</dbReference>
<dbReference type="GO" id="GO:0005829">
    <property type="term" value="C:cytosol"/>
    <property type="evidence" value="ECO:0007669"/>
    <property type="project" value="GOC"/>
</dbReference>
<dbReference type="GO" id="GO:0043023">
    <property type="term" value="F:ribosomal large subunit binding"/>
    <property type="evidence" value="ECO:0007669"/>
    <property type="project" value="TreeGrafter"/>
</dbReference>
<dbReference type="GO" id="GO:0002184">
    <property type="term" value="P:cytoplasmic translational termination"/>
    <property type="evidence" value="ECO:0007669"/>
    <property type="project" value="TreeGrafter"/>
</dbReference>
<dbReference type="CDD" id="cd00520">
    <property type="entry name" value="RRF"/>
    <property type="match status" value="1"/>
</dbReference>
<dbReference type="FunFam" id="1.10.132.20:FF:000001">
    <property type="entry name" value="Ribosome-recycling factor"/>
    <property type="match status" value="1"/>
</dbReference>
<dbReference type="FunFam" id="3.30.1360.40:FF:000001">
    <property type="entry name" value="Ribosome-recycling factor"/>
    <property type="match status" value="1"/>
</dbReference>
<dbReference type="Gene3D" id="3.30.1360.40">
    <property type="match status" value="1"/>
</dbReference>
<dbReference type="Gene3D" id="1.10.132.20">
    <property type="entry name" value="Ribosome-recycling factor"/>
    <property type="match status" value="1"/>
</dbReference>
<dbReference type="HAMAP" id="MF_00040">
    <property type="entry name" value="RRF"/>
    <property type="match status" value="1"/>
</dbReference>
<dbReference type="InterPro" id="IPR002661">
    <property type="entry name" value="Ribosome_recyc_fac"/>
</dbReference>
<dbReference type="InterPro" id="IPR023584">
    <property type="entry name" value="Ribosome_recyc_fac_dom"/>
</dbReference>
<dbReference type="InterPro" id="IPR036191">
    <property type="entry name" value="RRF_sf"/>
</dbReference>
<dbReference type="NCBIfam" id="TIGR00496">
    <property type="entry name" value="frr"/>
    <property type="match status" value="1"/>
</dbReference>
<dbReference type="PANTHER" id="PTHR20982:SF3">
    <property type="entry name" value="MITOCHONDRIAL RIBOSOME RECYCLING FACTOR PSEUDO 1"/>
    <property type="match status" value="1"/>
</dbReference>
<dbReference type="PANTHER" id="PTHR20982">
    <property type="entry name" value="RIBOSOME RECYCLING FACTOR"/>
    <property type="match status" value="1"/>
</dbReference>
<dbReference type="Pfam" id="PF01765">
    <property type="entry name" value="RRF"/>
    <property type="match status" value="1"/>
</dbReference>
<dbReference type="SUPFAM" id="SSF55194">
    <property type="entry name" value="Ribosome recycling factor, RRF"/>
    <property type="match status" value="1"/>
</dbReference>
<reference key="1">
    <citation type="journal article" date="2007" name="Science">
        <title>Legumes symbioses: absence of nod genes in photosynthetic bradyrhizobia.</title>
        <authorList>
            <person name="Giraud E."/>
            <person name="Moulin L."/>
            <person name="Vallenet D."/>
            <person name="Barbe V."/>
            <person name="Cytryn E."/>
            <person name="Avarre J.-C."/>
            <person name="Jaubert M."/>
            <person name="Simon D."/>
            <person name="Cartieaux F."/>
            <person name="Prin Y."/>
            <person name="Bena G."/>
            <person name="Hannibal L."/>
            <person name="Fardoux J."/>
            <person name="Kojadinovic M."/>
            <person name="Vuillet L."/>
            <person name="Lajus A."/>
            <person name="Cruveiller S."/>
            <person name="Rouy Z."/>
            <person name="Mangenot S."/>
            <person name="Segurens B."/>
            <person name="Dossat C."/>
            <person name="Franck W.L."/>
            <person name="Chang W.-S."/>
            <person name="Saunders E."/>
            <person name="Bruce D."/>
            <person name="Richardson P."/>
            <person name="Normand P."/>
            <person name="Dreyfus B."/>
            <person name="Pignol D."/>
            <person name="Stacey G."/>
            <person name="Emerich D."/>
            <person name="Vermeglio A."/>
            <person name="Medigue C."/>
            <person name="Sadowsky M."/>
        </authorList>
    </citation>
    <scope>NUCLEOTIDE SEQUENCE [LARGE SCALE GENOMIC DNA]</scope>
    <source>
        <strain>BTAi1 / ATCC BAA-1182</strain>
    </source>
</reference>
<proteinExistence type="inferred from homology"/>
<feature type="chain" id="PRO_0000341002" description="Ribosome-recycling factor">
    <location>
        <begin position="1"/>
        <end position="187"/>
    </location>
</feature>
<gene>
    <name evidence="1" type="primary">frr</name>
    <name type="ordered locus">BBta_4514</name>
</gene>
<accession>A5EK52</accession>
<organism>
    <name type="scientific">Bradyrhizobium sp. (strain BTAi1 / ATCC BAA-1182)</name>
    <dbReference type="NCBI Taxonomy" id="288000"/>
    <lineage>
        <taxon>Bacteria</taxon>
        <taxon>Pseudomonadati</taxon>
        <taxon>Pseudomonadota</taxon>
        <taxon>Alphaproteobacteria</taxon>
        <taxon>Hyphomicrobiales</taxon>
        <taxon>Nitrobacteraceae</taxon>
        <taxon>Bradyrhizobium</taxon>
    </lineage>
</organism>
<comment type="function">
    <text evidence="1">Responsible for the release of ribosomes from messenger RNA at the termination of protein biosynthesis. May increase the efficiency of translation by recycling ribosomes from one round of translation to another.</text>
</comment>
<comment type="subcellular location">
    <subcellularLocation>
        <location evidence="1">Cytoplasm</location>
    </subcellularLocation>
</comment>
<comment type="similarity">
    <text evidence="1">Belongs to the RRF family.</text>
</comment>
<protein>
    <recommendedName>
        <fullName evidence="1">Ribosome-recycling factor</fullName>
        <shortName evidence="1">RRF</shortName>
    </recommendedName>
    <alternativeName>
        <fullName evidence="1">Ribosome-releasing factor</fullName>
    </alternativeName>
</protein>
<keyword id="KW-0963">Cytoplasm</keyword>
<keyword id="KW-0648">Protein biosynthesis</keyword>
<keyword id="KW-1185">Reference proteome</keyword>